<dbReference type="EMBL" id="CU459141">
    <property type="protein sequence ID" value="CAM88209.1"/>
    <property type="molecule type" value="Genomic_DNA"/>
</dbReference>
<dbReference type="RefSeq" id="WP_001229357.1">
    <property type="nucleotide sequence ID" value="NZ_JBDGFB010000003.1"/>
</dbReference>
<dbReference type="SMR" id="B0VEA4"/>
<dbReference type="EnsemblBacteria" id="CAM88209">
    <property type="protein sequence ID" value="CAM88209"/>
    <property type="gene ID" value="ABAYE3415"/>
</dbReference>
<dbReference type="GeneID" id="92892353"/>
<dbReference type="KEGG" id="aby:ABAYE3415"/>
<dbReference type="HOGENOM" id="CLU_148518_0_0_6"/>
<dbReference type="GO" id="GO:0022627">
    <property type="term" value="C:cytosolic small ribosomal subunit"/>
    <property type="evidence" value="ECO:0007669"/>
    <property type="project" value="TreeGrafter"/>
</dbReference>
<dbReference type="GO" id="GO:0019843">
    <property type="term" value="F:rRNA binding"/>
    <property type="evidence" value="ECO:0007669"/>
    <property type="project" value="UniProtKB-UniRule"/>
</dbReference>
<dbReference type="GO" id="GO:0003735">
    <property type="term" value="F:structural constituent of ribosome"/>
    <property type="evidence" value="ECO:0007669"/>
    <property type="project" value="InterPro"/>
</dbReference>
<dbReference type="GO" id="GO:0006412">
    <property type="term" value="P:translation"/>
    <property type="evidence" value="ECO:0007669"/>
    <property type="project" value="UniProtKB-UniRule"/>
</dbReference>
<dbReference type="CDD" id="cd00353">
    <property type="entry name" value="Ribosomal_S15p_S13e"/>
    <property type="match status" value="1"/>
</dbReference>
<dbReference type="FunFam" id="1.10.287.10:FF:000002">
    <property type="entry name" value="30S ribosomal protein S15"/>
    <property type="match status" value="1"/>
</dbReference>
<dbReference type="Gene3D" id="6.10.250.3130">
    <property type="match status" value="1"/>
</dbReference>
<dbReference type="Gene3D" id="1.10.287.10">
    <property type="entry name" value="S15/NS1, RNA-binding"/>
    <property type="match status" value="1"/>
</dbReference>
<dbReference type="HAMAP" id="MF_01343_B">
    <property type="entry name" value="Ribosomal_uS15_B"/>
    <property type="match status" value="1"/>
</dbReference>
<dbReference type="InterPro" id="IPR000589">
    <property type="entry name" value="Ribosomal_uS15"/>
</dbReference>
<dbReference type="InterPro" id="IPR005290">
    <property type="entry name" value="Ribosomal_uS15_bac-type"/>
</dbReference>
<dbReference type="InterPro" id="IPR009068">
    <property type="entry name" value="uS15_NS1_RNA-bd_sf"/>
</dbReference>
<dbReference type="NCBIfam" id="TIGR00952">
    <property type="entry name" value="S15_bact"/>
    <property type="match status" value="1"/>
</dbReference>
<dbReference type="PANTHER" id="PTHR23321">
    <property type="entry name" value="RIBOSOMAL PROTEIN S15, BACTERIAL AND ORGANELLAR"/>
    <property type="match status" value="1"/>
</dbReference>
<dbReference type="PANTHER" id="PTHR23321:SF26">
    <property type="entry name" value="SMALL RIBOSOMAL SUBUNIT PROTEIN US15M"/>
    <property type="match status" value="1"/>
</dbReference>
<dbReference type="Pfam" id="PF00312">
    <property type="entry name" value="Ribosomal_S15"/>
    <property type="match status" value="1"/>
</dbReference>
<dbReference type="SMART" id="SM01387">
    <property type="entry name" value="Ribosomal_S15"/>
    <property type="match status" value="1"/>
</dbReference>
<dbReference type="SUPFAM" id="SSF47060">
    <property type="entry name" value="S15/NS1 RNA-binding domain"/>
    <property type="match status" value="1"/>
</dbReference>
<dbReference type="PROSITE" id="PS00362">
    <property type="entry name" value="RIBOSOMAL_S15"/>
    <property type="match status" value="1"/>
</dbReference>
<keyword id="KW-0687">Ribonucleoprotein</keyword>
<keyword id="KW-0689">Ribosomal protein</keyword>
<keyword id="KW-0694">RNA-binding</keyword>
<keyword id="KW-0699">rRNA-binding</keyword>
<evidence type="ECO:0000255" key="1">
    <source>
        <dbReference type="HAMAP-Rule" id="MF_01343"/>
    </source>
</evidence>
<evidence type="ECO:0000305" key="2"/>
<protein>
    <recommendedName>
        <fullName evidence="1">Small ribosomal subunit protein uS15</fullName>
    </recommendedName>
    <alternativeName>
        <fullName evidence="2">30S ribosomal protein S15</fullName>
    </alternativeName>
</protein>
<comment type="function">
    <text evidence="1">One of the primary rRNA binding proteins, it binds directly to 16S rRNA where it helps nucleate assembly of the platform of the 30S subunit by binding and bridging several RNA helices of the 16S rRNA.</text>
</comment>
<comment type="function">
    <text evidence="1">Forms an intersubunit bridge (bridge B4) with the 23S rRNA of the 50S subunit in the ribosome.</text>
</comment>
<comment type="subunit">
    <text evidence="1">Part of the 30S ribosomal subunit. Forms a bridge to the 50S subunit in the 70S ribosome, contacting the 23S rRNA.</text>
</comment>
<comment type="similarity">
    <text evidence="1">Belongs to the universal ribosomal protein uS15 family.</text>
</comment>
<name>RS15_ACIBY</name>
<gene>
    <name evidence="1" type="primary">rpsO</name>
    <name type="ordered locus">ABAYE3415</name>
</gene>
<proteinExistence type="inferred from homology"/>
<reference key="1">
    <citation type="journal article" date="2008" name="PLoS ONE">
        <title>Comparative analysis of Acinetobacters: three genomes for three lifestyles.</title>
        <authorList>
            <person name="Vallenet D."/>
            <person name="Nordmann P."/>
            <person name="Barbe V."/>
            <person name="Poirel L."/>
            <person name="Mangenot S."/>
            <person name="Bataille E."/>
            <person name="Dossat C."/>
            <person name="Gas S."/>
            <person name="Kreimeyer A."/>
            <person name="Lenoble P."/>
            <person name="Oztas S."/>
            <person name="Poulain J."/>
            <person name="Segurens B."/>
            <person name="Robert C."/>
            <person name="Abergel C."/>
            <person name="Claverie J.-M."/>
            <person name="Raoult D."/>
            <person name="Medigue C."/>
            <person name="Weissenbach J."/>
            <person name="Cruveiller S."/>
        </authorList>
    </citation>
    <scope>NUCLEOTIDE SEQUENCE [LARGE SCALE GENOMIC DNA]</scope>
    <source>
        <strain>AYE</strain>
    </source>
</reference>
<organism>
    <name type="scientific">Acinetobacter baumannii (strain AYE)</name>
    <dbReference type="NCBI Taxonomy" id="509173"/>
    <lineage>
        <taxon>Bacteria</taxon>
        <taxon>Pseudomonadati</taxon>
        <taxon>Pseudomonadota</taxon>
        <taxon>Gammaproteobacteria</taxon>
        <taxon>Moraxellales</taxon>
        <taxon>Moraxellaceae</taxon>
        <taxon>Acinetobacter</taxon>
        <taxon>Acinetobacter calcoaceticus/baumannii complex</taxon>
    </lineage>
</organism>
<feature type="chain" id="PRO_1000143062" description="Small ribosomal subunit protein uS15">
    <location>
        <begin position="1"/>
        <end position="89"/>
    </location>
</feature>
<sequence>MALTNADRAEIIAKFARAENDTGSPEVQVALLTAQINDLQGHFKAHKHDHHSRRGLIRMVNQRRKLLDYLNGKDHERYTALIGALGLRR</sequence>
<accession>B0VEA4</accession>